<dbReference type="EC" id="5.3.1.24" evidence="1"/>
<dbReference type="EMBL" id="CP000885">
    <property type="protein sequence ID" value="ABX44191.1"/>
    <property type="molecule type" value="Genomic_DNA"/>
</dbReference>
<dbReference type="RefSeq" id="WP_012201839.1">
    <property type="nucleotide sequence ID" value="NC_010001.1"/>
</dbReference>
<dbReference type="SMR" id="A9KL42"/>
<dbReference type="STRING" id="357809.Cphy_3844"/>
<dbReference type="KEGG" id="cpy:Cphy_3844"/>
<dbReference type="eggNOG" id="COG0135">
    <property type="taxonomic scope" value="Bacteria"/>
</dbReference>
<dbReference type="HOGENOM" id="CLU_076364_1_0_9"/>
<dbReference type="OrthoDB" id="9786954at2"/>
<dbReference type="UniPathway" id="UPA00035">
    <property type="reaction ID" value="UER00042"/>
</dbReference>
<dbReference type="Proteomes" id="UP000000370">
    <property type="component" value="Chromosome"/>
</dbReference>
<dbReference type="GO" id="GO:0004640">
    <property type="term" value="F:phosphoribosylanthranilate isomerase activity"/>
    <property type="evidence" value="ECO:0007669"/>
    <property type="project" value="UniProtKB-UniRule"/>
</dbReference>
<dbReference type="GO" id="GO:0000162">
    <property type="term" value="P:L-tryptophan biosynthetic process"/>
    <property type="evidence" value="ECO:0007669"/>
    <property type="project" value="UniProtKB-UniRule"/>
</dbReference>
<dbReference type="CDD" id="cd00405">
    <property type="entry name" value="PRAI"/>
    <property type="match status" value="1"/>
</dbReference>
<dbReference type="Gene3D" id="3.20.20.70">
    <property type="entry name" value="Aldolase class I"/>
    <property type="match status" value="1"/>
</dbReference>
<dbReference type="HAMAP" id="MF_00135">
    <property type="entry name" value="PRAI"/>
    <property type="match status" value="1"/>
</dbReference>
<dbReference type="InterPro" id="IPR013785">
    <property type="entry name" value="Aldolase_TIM"/>
</dbReference>
<dbReference type="InterPro" id="IPR001240">
    <property type="entry name" value="PRAI_dom"/>
</dbReference>
<dbReference type="InterPro" id="IPR011060">
    <property type="entry name" value="RibuloseP-bd_barrel"/>
</dbReference>
<dbReference type="InterPro" id="IPR044643">
    <property type="entry name" value="TrpF_fam"/>
</dbReference>
<dbReference type="PANTHER" id="PTHR42894">
    <property type="entry name" value="N-(5'-PHOSPHORIBOSYL)ANTHRANILATE ISOMERASE"/>
    <property type="match status" value="1"/>
</dbReference>
<dbReference type="PANTHER" id="PTHR42894:SF1">
    <property type="entry name" value="N-(5'-PHOSPHORIBOSYL)ANTHRANILATE ISOMERASE"/>
    <property type="match status" value="1"/>
</dbReference>
<dbReference type="Pfam" id="PF00697">
    <property type="entry name" value="PRAI"/>
    <property type="match status" value="1"/>
</dbReference>
<dbReference type="SUPFAM" id="SSF51366">
    <property type="entry name" value="Ribulose-phoshate binding barrel"/>
    <property type="match status" value="1"/>
</dbReference>
<sequence>MKTKICGLKSLREIEIVNKYAPNYVGFVFAGVKRKIDEEVASLLRRELSSEIQAVGVFVNESIERIAKMCEKNTIQLVQLHGDEDRDYINALKLEVGAPIIKAVRAQSVEQILEALTLPCDYFLYDTYSEHSYGGEGKRFDETILTEVYKESSNNEFKKYLQKPYFIAGGLTAQNVRLLDSRLEPYGVDVSSGVESMGQKDEEKVKEFLFAAWRWNEN</sequence>
<name>TRPF_LACP7</name>
<gene>
    <name evidence="1" type="primary">trpF</name>
    <name type="ordered locus">Cphy_3844</name>
</gene>
<comment type="catalytic activity">
    <reaction evidence="1">
        <text>N-(5-phospho-beta-D-ribosyl)anthranilate = 1-(2-carboxyphenylamino)-1-deoxy-D-ribulose 5-phosphate</text>
        <dbReference type="Rhea" id="RHEA:21540"/>
        <dbReference type="ChEBI" id="CHEBI:18277"/>
        <dbReference type="ChEBI" id="CHEBI:58613"/>
        <dbReference type="EC" id="5.3.1.24"/>
    </reaction>
</comment>
<comment type="pathway">
    <text evidence="1">Amino-acid biosynthesis; L-tryptophan biosynthesis; L-tryptophan from chorismate: step 3/5.</text>
</comment>
<comment type="similarity">
    <text evidence="1">Belongs to the TrpF family.</text>
</comment>
<evidence type="ECO:0000255" key="1">
    <source>
        <dbReference type="HAMAP-Rule" id="MF_00135"/>
    </source>
</evidence>
<feature type="chain" id="PRO_1000197095" description="N-(5'-phosphoribosyl)anthranilate isomerase">
    <location>
        <begin position="1"/>
        <end position="218"/>
    </location>
</feature>
<protein>
    <recommendedName>
        <fullName evidence="1">N-(5'-phosphoribosyl)anthranilate isomerase</fullName>
        <shortName evidence="1">PRAI</shortName>
        <ecNumber evidence="1">5.3.1.24</ecNumber>
    </recommendedName>
</protein>
<proteinExistence type="inferred from homology"/>
<organism>
    <name type="scientific">Lachnoclostridium phytofermentans (strain ATCC 700394 / DSM 18823 / ISDg)</name>
    <name type="common">Clostridium phytofermentans</name>
    <dbReference type="NCBI Taxonomy" id="357809"/>
    <lineage>
        <taxon>Bacteria</taxon>
        <taxon>Bacillati</taxon>
        <taxon>Bacillota</taxon>
        <taxon>Clostridia</taxon>
        <taxon>Lachnospirales</taxon>
        <taxon>Lachnospiraceae</taxon>
    </lineage>
</organism>
<accession>A9KL42</accession>
<reference key="1">
    <citation type="submission" date="2007-11" db="EMBL/GenBank/DDBJ databases">
        <title>Complete genome sequence of Clostridium phytofermentans ISDg.</title>
        <authorList>
            <person name="Leschine S.B."/>
            <person name="Warnick T.A."/>
            <person name="Blanchard J.L."/>
            <person name="Schnell D.J."/>
            <person name="Petit E.L."/>
            <person name="LaTouf W.G."/>
            <person name="Copeland A."/>
            <person name="Lucas S."/>
            <person name="Lapidus A."/>
            <person name="Barry K."/>
            <person name="Glavina del Rio T."/>
            <person name="Dalin E."/>
            <person name="Tice H."/>
            <person name="Pitluck S."/>
            <person name="Kiss H."/>
            <person name="Brettin T."/>
            <person name="Bruce D."/>
            <person name="Detter J.C."/>
            <person name="Han C."/>
            <person name="Kuske C."/>
            <person name="Schmutz J."/>
            <person name="Larimer F."/>
            <person name="Land M."/>
            <person name="Hauser L."/>
            <person name="Kyrpides N."/>
            <person name="Kim E.A."/>
            <person name="Richardson P."/>
        </authorList>
    </citation>
    <scope>NUCLEOTIDE SEQUENCE [LARGE SCALE GENOMIC DNA]</scope>
    <source>
        <strain>ATCC 700394 / DSM 18823 / ISDg</strain>
    </source>
</reference>
<keyword id="KW-0028">Amino-acid biosynthesis</keyword>
<keyword id="KW-0057">Aromatic amino acid biosynthesis</keyword>
<keyword id="KW-0413">Isomerase</keyword>
<keyword id="KW-1185">Reference proteome</keyword>
<keyword id="KW-0822">Tryptophan biosynthesis</keyword>